<reference key="1">
    <citation type="journal article" date="2008" name="J. Bacteriol.">
        <title>Insights into the environmental resistance gene pool from the genome sequence of the multidrug-resistant environmental isolate Escherichia coli SMS-3-5.</title>
        <authorList>
            <person name="Fricke W.F."/>
            <person name="Wright M.S."/>
            <person name="Lindell A.H."/>
            <person name="Harkins D.M."/>
            <person name="Baker-Austin C."/>
            <person name="Ravel J."/>
            <person name="Stepanauskas R."/>
        </authorList>
    </citation>
    <scope>NUCLEOTIDE SEQUENCE [LARGE SCALE GENOMIC DNA]</scope>
    <source>
        <strain>SMS-3-5 / SECEC</strain>
    </source>
</reference>
<name>RS4_ECOSM</name>
<evidence type="ECO:0000255" key="1">
    <source>
        <dbReference type="HAMAP-Rule" id="MF_01306"/>
    </source>
</evidence>
<evidence type="ECO:0000305" key="2"/>
<accession>B1LHB0</accession>
<comment type="function">
    <text evidence="1">One of the primary rRNA binding proteins, it binds directly to 16S rRNA where it nucleates assembly of the body of the 30S subunit.</text>
</comment>
<comment type="function">
    <text evidence="1">With S5 and S12 plays an important role in translational accuracy.</text>
</comment>
<comment type="subunit">
    <text evidence="1">Part of the 30S ribosomal subunit. Contacts protein S5. The interaction surface between S4 and S5 is involved in control of translational fidelity.</text>
</comment>
<comment type="similarity">
    <text evidence="1">Belongs to the universal ribosomal protein uS4 family.</text>
</comment>
<dbReference type="EMBL" id="CP000970">
    <property type="protein sequence ID" value="ACB19228.1"/>
    <property type="molecule type" value="Genomic_DNA"/>
</dbReference>
<dbReference type="RefSeq" id="WP_000135224.1">
    <property type="nucleotide sequence ID" value="NC_010498.1"/>
</dbReference>
<dbReference type="SMR" id="B1LHB0"/>
<dbReference type="GeneID" id="93778691"/>
<dbReference type="KEGG" id="ecm:EcSMS35_3591"/>
<dbReference type="HOGENOM" id="CLU_092403_0_2_6"/>
<dbReference type="Proteomes" id="UP000007011">
    <property type="component" value="Chromosome"/>
</dbReference>
<dbReference type="GO" id="GO:0015935">
    <property type="term" value="C:small ribosomal subunit"/>
    <property type="evidence" value="ECO:0007669"/>
    <property type="project" value="InterPro"/>
</dbReference>
<dbReference type="GO" id="GO:0019843">
    <property type="term" value="F:rRNA binding"/>
    <property type="evidence" value="ECO:0007669"/>
    <property type="project" value="UniProtKB-UniRule"/>
</dbReference>
<dbReference type="GO" id="GO:0003735">
    <property type="term" value="F:structural constituent of ribosome"/>
    <property type="evidence" value="ECO:0007669"/>
    <property type="project" value="InterPro"/>
</dbReference>
<dbReference type="GO" id="GO:0042274">
    <property type="term" value="P:ribosomal small subunit biogenesis"/>
    <property type="evidence" value="ECO:0007669"/>
    <property type="project" value="TreeGrafter"/>
</dbReference>
<dbReference type="GO" id="GO:0006412">
    <property type="term" value="P:translation"/>
    <property type="evidence" value="ECO:0007669"/>
    <property type="project" value="UniProtKB-UniRule"/>
</dbReference>
<dbReference type="CDD" id="cd00165">
    <property type="entry name" value="S4"/>
    <property type="match status" value="1"/>
</dbReference>
<dbReference type="FunFam" id="1.10.1050.10:FF:000001">
    <property type="entry name" value="30S ribosomal protein S4"/>
    <property type="match status" value="1"/>
</dbReference>
<dbReference type="FunFam" id="3.10.290.10:FF:000001">
    <property type="entry name" value="30S ribosomal protein S4"/>
    <property type="match status" value="1"/>
</dbReference>
<dbReference type="Gene3D" id="1.10.1050.10">
    <property type="entry name" value="Ribosomal Protein S4 Delta 41, Chain A, domain 1"/>
    <property type="match status" value="1"/>
</dbReference>
<dbReference type="Gene3D" id="3.10.290.10">
    <property type="entry name" value="RNA-binding S4 domain"/>
    <property type="match status" value="1"/>
</dbReference>
<dbReference type="HAMAP" id="MF_01306_B">
    <property type="entry name" value="Ribosomal_uS4_B"/>
    <property type="match status" value="1"/>
</dbReference>
<dbReference type="InterPro" id="IPR022801">
    <property type="entry name" value="Ribosomal_uS4"/>
</dbReference>
<dbReference type="InterPro" id="IPR005709">
    <property type="entry name" value="Ribosomal_uS4_bac-type"/>
</dbReference>
<dbReference type="InterPro" id="IPR018079">
    <property type="entry name" value="Ribosomal_uS4_CS"/>
</dbReference>
<dbReference type="InterPro" id="IPR001912">
    <property type="entry name" value="Ribosomal_uS4_N"/>
</dbReference>
<dbReference type="InterPro" id="IPR002942">
    <property type="entry name" value="S4_RNA-bd"/>
</dbReference>
<dbReference type="InterPro" id="IPR036986">
    <property type="entry name" value="S4_RNA-bd_sf"/>
</dbReference>
<dbReference type="NCBIfam" id="NF003717">
    <property type="entry name" value="PRK05327.1"/>
    <property type="match status" value="1"/>
</dbReference>
<dbReference type="NCBIfam" id="TIGR01017">
    <property type="entry name" value="rpsD_bact"/>
    <property type="match status" value="1"/>
</dbReference>
<dbReference type="PANTHER" id="PTHR11831">
    <property type="entry name" value="30S 40S RIBOSOMAL PROTEIN"/>
    <property type="match status" value="1"/>
</dbReference>
<dbReference type="PANTHER" id="PTHR11831:SF4">
    <property type="entry name" value="SMALL RIBOSOMAL SUBUNIT PROTEIN US4M"/>
    <property type="match status" value="1"/>
</dbReference>
<dbReference type="Pfam" id="PF00163">
    <property type="entry name" value="Ribosomal_S4"/>
    <property type="match status" value="1"/>
</dbReference>
<dbReference type="Pfam" id="PF01479">
    <property type="entry name" value="S4"/>
    <property type="match status" value="1"/>
</dbReference>
<dbReference type="SMART" id="SM01390">
    <property type="entry name" value="Ribosomal_S4"/>
    <property type="match status" value="1"/>
</dbReference>
<dbReference type="SMART" id="SM00363">
    <property type="entry name" value="S4"/>
    <property type="match status" value="1"/>
</dbReference>
<dbReference type="SUPFAM" id="SSF55174">
    <property type="entry name" value="Alpha-L RNA-binding motif"/>
    <property type="match status" value="1"/>
</dbReference>
<dbReference type="PROSITE" id="PS00632">
    <property type="entry name" value="RIBOSOMAL_S4"/>
    <property type="match status" value="1"/>
</dbReference>
<dbReference type="PROSITE" id="PS50889">
    <property type="entry name" value="S4"/>
    <property type="match status" value="1"/>
</dbReference>
<keyword id="KW-0687">Ribonucleoprotein</keyword>
<keyword id="KW-0689">Ribosomal protein</keyword>
<keyword id="KW-0694">RNA-binding</keyword>
<keyword id="KW-0699">rRNA-binding</keyword>
<proteinExistence type="inferred from homology"/>
<protein>
    <recommendedName>
        <fullName evidence="1">Small ribosomal subunit protein uS4</fullName>
    </recommendedName>
    <alternativeName>
        <fullName evidence="2">30S ribosomal protein S4</fullName>
    </alternativeName>
</protein>
<gene>
    <name evidence="1" type="primary">rpsD</name>
    <name type="ordered locus">EcSMS35_3591</name>
</gene>
<sequence>MARYLGPKLKLSRREGTDLFLKSGVRAIDTKCKIEQAPGQHGARKPRLSDYGVQLREKQKVRRIYGVLERQFRNYYKEAARLKGNTGENLLALLEGRLDNVVYRMGFGATRAEARQLVSHKAIMVNGRVVNIASYQVSPNDVVSIREKAKKQSRVKAALELAEQREKPTWLEVDAGKMEGTFKRKPERSDLSADINEHLIVELYSK</sequence>
<feature type="chain" id="PRO_1000140731" description="Small ribosomal subunit protein uS4">
    <location>
        <begin position="1"/>
        <end position="206"/>
    </location>
</feature>
<feature type="domain" description="S4 RNA-binding" evidence="1">
    <location>
        <begin position="96"/>
        <end position="156"/>
    </location>
</feature>
<organism>
    <name type="scientific">Escherichia coli (strain SMS-3-5 / SECEC)</name>
    <dbReference type="NCBI Taxonomy" id="439855"/>
    <lineage>
        <taxon>Bacteria</taxon>
        <taxon>Pseudomonadati</taxon>
        <taxon>Pseudomonadota</taxon>
        <taxon>Gammaproteobacteria</taxon>
        <taxon>Enterobacterales</taxon>
        <taxon>Enterobacteriaceae</taxon>
        <taxon>Escherichia</taxon>
    </lineage>
</organism>